<dbReference type="EMBL" id="X80338">
    <property type="protein sequence ID" value="CAA56584.1"/>
    <property type="status" value="ALT_INIT"/>
    <property type="molecule type" value="mRNA"/>
</dbReference>
<dbReference type="EMBL" id="D83147">
    <property type="protein sequence ID" value="BAA11825.1"/>
    <property type="molecule type" value="mRNA"/>
</dbReference>
<dbReference type="EMBL" id="BC068021">
    <property type="protein sequence ID" value="AAH68021.1"/>
    <property type="molecule type" value="mRNA"/>
</dbReference>
<dbReference type="CCDS" id="CCDS29007.1"/>
<dbReference type="PIR" id="S74253">
    <property type="entry name" value="S74253"/>
</dbReference>
<dbReference type="RefSeq" id="NP_035510.1">
    <property type="nucleotide sequence ID" value="NM_011380.2"/>
</dbReference>
<dbReference type="SMR" id="Q62232"/>
<dbReference type="BioGRID" id="203260">
    <property type="interactions" value="1"/>
</dbReference>
<dbReference type="FunCoup" id="Q62232">
    <property type="interactions" value="414"/>
</dbReference>
<dbReference type="IntAct" id="Q62232">
    <property type="interactions" value="1"/>
</dbReference>
<dbReference type="STRING" id="10090.ENSMUSP00000125871"/>
<dbReference type="PhosphoSitePlus" id="Q62232"/>
<dbReference type="PaxDb" id="10090-ENSMUSP00000125871"/>
<dbReference type="Antibodypedia" id="29934">
    <property type="antibodies" value="192 antibodies from 31 providers"/>
</dbReference>
<dbReference type="DNASU" id="20472"/>
<dbReference type="Ensembl" id="ENSMUST00000163568.4">
    <property type="protein sequence ID" value="ENSMUSP00000125871.3"/>
    <property type="gene ID" value="ENSMUSG00000024134.13"/>
</dbReference>
<dbReference type="GeneID" id="20472"/>
<dbReference type="KEGG" id="mmu:20472"/>
<dbReference type="UCSC" id="uc008duc.2">
    <property type="organism name" value="mouse"/>
</dbReference>
<dbReference type="AGR" id="MGI:102778"/>
<dbReference type="CTD" id="10736"/>
<dbReference type="MGI" id="MGI:102778">
    <property type="gene designation" value="Six2"/>
</dbReference>
<dbReference type="VEuPathDB" id="HostDB:ENSMUSG00000024134"/>
<dbReference type="eggNOG" id="KOG0775">
    <property type="taxonomic scope" value="Eukaryota"/>
</dbReference>
<dbReference type="GeneTree" id="ENSGT00940000158292"/>
<dbReference type="HOGENOM" id="CLU_046914_2_0_1"/>
<dbReference type="InParanoid" id="Q62232"/>
<dbReference type="OMA" id="IHHHALQ"/>
<dbReference type="OrthoDB" id="3501850at2759"/>
<dbReference type="PhylomeDB" id="Q62232"/>
<dbReference type="TreeFam" id="TF315545"/>
<dbReference type="BioGRID-ORCS" id="20472">
    <property type="hits" value="1 hit in 80 CRISPR screens"/>
</dbReference>
<dbReference type="PRO" id="PR:Q62232"/>
<dbReference type="Proteomes" id="UP000000589">
    <property type="component" value="Chromosome 17"/>
</dbReference>
<dbReference type="RNAct" id="Q62232">
    <property type="molecule type" value="protein"/>
</dbReference>
<dbReference type="Bgee" id="ENSMUSG00000024134">
    <property type="expression patterns" value="Expressed in undifferentiated genital tubercle and 142 other cell types or tissues"/>
</dbReference>
<dbReference type="GO" id="GO:0005654">
    <property type="term" value="C:nucleoplasm"/>
    <property type="evidence" value="ECO:0000304"/>
    <property type="project" value="Reactome"/>
</dbReference>
<dbReference type="GO" id="GO:0005634">
    <property type="term" value="C:nucleus"/>
    <property type="evidence" value="ECO:0000314"/>
    <property type="project" value="MGI"/>
</dbReference>
<dbReference type="GO" id="GO:0001228">
    <property type="term" value="F:DNA-binding transcription activator activity, RNA polymerase II-specific"/>
    <property type="evidence" value="ECO:0000314"/>
    <property type="project" value="NTNU_SB"/>
</dbReference>
<dbReference type="GO" id="GO:0003700">
    <property type="term" value="F:DNA-binding transcription factor activity"/>
    <property type="evidence" value="ECO:0000314"/>
    <property type="project" value="MGI"/>
</dbReference>
<dbReference type="GO" id="GO:0044877">
    <property type="term" value="F:protein-containing complex binding"/>
    <property type="evidence" value="ECO:0000314"/>
    <property type="project" value="UniProtKB"/>
</dbReference>
<dbReference type="GO" id="GO:0000978">
    <property type="term" value="F:RNA polymerase II cis-regulatory region sequence-specific DNA binding"/>
    <property type="evidence" value="ECO:0000314"/>
    <property type="project" value="NTNU_SB"/>
</dbReference>
<dbReference type="GO" id="GO:0043565">
    <property type="term" value="F:sequence-specific DNA binding"/>
    <property type="evidence" value="ECO:0000314"/>
    <property type="project" value="MGI"/>
</dbReference>
<dbReference type="GO" id="GO:0008134">
    <property type="term" value="F:transcription factor binding"/>
    <property type="evidence" value="ECO:0000353"/>
    <property type="project" value="UniProtKB"/>
</dbReference>
<dbReference type="GO" id="GO:0009948">
    <property type="term" value="P:anterior/posterior axis specification"/>
    <property type="evidence" value="ECO:0000314"/>
    <property type="project" value="UniProtKB"/>
</dbReference>
<dbReference type="GO" id="GO:0016477">
    <property type="term" value="P:cell migration"/>
    <property type="evidence" value="ECO:0000250"/>
    <property type="project" value="UniProtKB"/>
</dbReference>
<dbReference type="GO" id="GO:0008283">
    <property type="term" value="P:cell population proliferation"/>
    <property type="evidence" value="ECO:0000315"/>
    <property type="project" value="MGI"/>
</dbReference>
<dbReference type="GO" id="GO:0002062">
    <property type="term" value="P:chondrocyte differentiation"/>
    <property type="evidence" value="ECO:0000315"/>
    <property type="project" value="MGI"/>
</dbReference>
<dbReference type="GO" id="GO:0072137">
    <property type="term" value="P:condensed mesenchymal cell proliferation"/>
    <property type="evidence" value="ECO:0000316"/>
    <property type="project" value="MGI"/>
</dbReference>
<dbReference type="GO" id="GO:0048701">
    <property type="term" value="P:embryonic cranial skeleton morphogenesis"/>
    <property type="evidence" value="ECO:0000315"/>
    <property type="project" value="MGI"/>
</dbReference>
<dbReference type="GO" id="GO:0048557">
    <property type="term" value="P:embryonic digestive tract morphogenesis"/>
    <property type="evidence" value="ECO:0000315"/>
    <property type="project" value="UniProtKB"/>
</dbReference>
<dbReference type="GO" id="GO:0048704">
    <property type="term" value="P:embryonic skeletal system morphogenesis"/>
    <property type="evidence" value="ECO:0000316"/>
    <property type="project" value="MGI"/>
</dbReference>
<dbReference type="GO" id="GO:0030855">
    <property type="term" value="P:epithelial cell differentiation"/>
    <property type="evidence" value="ECO:0000315"/>
    <property type="project" value="MGI"/>
</dbReference>
<dbReference type="GO" id="GO:0001822">
    <property type="term" value="P:kidney development"/>
    <property type="evidence" value="ECO:0000315"/>
    <property type="project" value="UniProtKB"/>
</dbReference>
<dbReference type="GO" id="GO:0072161">
    <property type="term" value="P:mesenchymal cell differentiation involved in kidney development"/>
    <property type="evidence" value="ECO:0000315"/>
    <property type="project" value="UniProtKB"/>
</dbReference>
<dbReference type="GO" id="GO:0072038">
    <property type="term" value="P:mesenchymal stem cell maintenance involved in nephron morphogenesis"/>
    <property type="evidence" value="ECO:0000314"/>
    <property type="project" value="UniProtKB"/>
</dbReference>
<dbReference type="GO" id="GO:0097168">
    <property type="term" value="P:mesenchymal stem cell proliferation"/>
    <property type="evidence" value="ECO:0000315"/>
    <property type="project" value="UniProtKB"/>
</dbReference>
<dbReference type="GO" id="GO:0003337">
    <property type="term" value="P:mesenchymal to epithelial transition involved in metanephros morphogenesis"/>
    <property type="evidence" value="ECO:0000270"/>
    <property type="project" value="UniProtKB"/>
</dbReference>
<dbReference type="GO" id="GO:0007501">
    <property type="term" value="P:mesodermal cell fate specification"/>
    <property type="evidence" value="ECO:0000314"/>
    <property type="project" value="UniProtKB"/>
</dbReference>
<dbReference type="GO" id="GO:0001656">
    <property type="term" value="P:metanephros development"/>
    <property type="evidence" value="ECO:0000315"/>
    <property type="project" value="MGI"/>
</dbReference>
<dbReference type="GO" id="GO:0042474">
    <property type="term" value="P:middle ear morphogenesis"/>
    <property type="evidence" value="ECO:0000316"/>
    <property type="project" value="MGI"/>
</dbReference>
<dbReference type="GO" id="GO:0030857">
    <property type="term" value="P:negative regulation of epithelial cell differentiation"/>
    <property type="evidence" value="ECO:0000315"/>
    <property type="project" value="MGI"/>
</dbReference>
<dbReference type="GO" id="GO:0072006">
    <property type="term" value="P:nephron development"/>
    <property type="evidence" value="ECO:0000315"/>
    <property type="project" value="UniProtKB"/>
</dbReference>
<dbReference type="GO" id="GO:0072028">
    <property type="term" value="P:nephron morphogenesis"/>
    <property type="evidence" value="ECO:0000315"/>
    <property type="project" value="UniProtKB"/>
</dbReference>
<dbReference type="GO" id="GO:1902732">
    <property type="term" value="P:positive regulation of chondrocyte proliferation"/>
    <property type="evidence" value="ECO:0000315"/>
    <property type="project" value="UniProtKB"/>
</dbReference>
<dbReference type="GO" id="GO:0045944">
    <property type="term" value="P:positive regulation of transcription by RNA polymerase II"/>
    <property type="evidence" value="ECO:0000314"/>
    <property type="project" value="MGI"/>
</dbReference>
<dbReference type="GO" id="GO:0006606">
    <property type="term" value="P:protein import into nucleus"/>
    <property type="evidence" value="ECO:0000314"/>
    <property type="project" value="MGI"/>
</dbReference>
<dbReference type="GO" id="GO:0090189">
    <property type="term" value="P:regulation of branching involved in ureteric bud morphogenesis"/>
    <property type="evidence" value="ECO:0000315"/>
    <property type="project" value="UniProtKB"/>
</dbReference>
<dbReference type="GO" id="GO:0032330">
    <property type="term" value="P:regulation of chondrocyte differentiation"/>
    <property type="evidence" value="ECO:0000315"/>
    <property type="project" value="UniProtKB"/>
</dbReference>
<dbReference type="GO" id="GO:0030278">
    <property type="term" value="P:regulation of ossification"/>
    <property type="evidence" value="ECO:0000315"/>
    <property type="project" value="UniProtKB"/>
</dbReference>
<dbReference type="CDD" id="cd00086">
    <property type="entry name" value="homeodomain"/>
    <property type="match status" value="1"/>
</dbReference>
<dbReference type="FunFam" id="1.10.10.60:FF:000063">
    <property type="entry name" value="SIX homeobox 2"/>
    <property type="match status" value="1"/>
</dbReference>
<dbReference type="Gene3D" id="1.10.10.60">
    <property type="entry name" value="Homeodomain-like"/>
    <property type="match status" value="1"/>
</dbReference>
<dbReference type="InterPro" id="IPR001356">
    <property type="entry name" value="HD"/>
</dbReference>
<dbReference type="InterPro" id="IPR017970">
    <property type="entry name" value="Homeobox_CS"/>
</dbReference>
<dbReference type="InterPro" id="IPR009057">
    <property type="entry name" value="Homeodomain-like_sf"/>
</dbReference>
<dbReference type="InterPro" id="IPR031701">
    <property type="entry name" value="SIX1_SD"/>
</dbReference>
<dbReference type="PANTHER" id="PTHR10390">
    <property type="entry name" value="HOMEOBOX PROTEIN SIX"/>
    <property type="match status" value="1"/>
</dbReference>
<dbReference type="PANTHER" id="PTHR10390:SF61">
    <property type="entry name" value="HOMEOBOX PROTEIN SIX2"/>
    <property type="match status" value="1"/>
</dbReference>
<dbReference type="Pfam" id="PF00046">
    <property type="entry name" value="Homeodomain"/>
    <property type="match status" value="1"/>
</dbReference>
<dbReference type="Pfam" id="PF16878">
    <property type="entry name" value="SIX1_SD"/>
    <property type="match status" value="1"/>
</dbReference>
<dbReference type="SMART" id="SM00389">
    <property type="entry name" value="HOX"/>
    <property type="match status" value="1"/>
</dbReference>
<dbReference type="SUPFAM" id="SSF46689">
    <property type="entry name" value="Homeodomain-like"/>
    <property type="match status" value="1"/>
</dbReference>
<dbReference type="PROSITE" id="PS00027">
    <property type="entry name" value="HOMEOBOX_1"/>
    <property type="match status" value="1"/>
</dbReference>
<dbReference type="PROSITE" id="PS50071">
    <property type="entry name" value="HOMEOBOX_2"/>
    <property type="match status" value="1"/>
</dbReference>
<feature type="chain" id="PRO_0000049298" description="Homeobox protein SIX2">
    <location>
        <begin position="1"/>
        <end position="296"/>
    </location>
</feature>
<feature type="DNA-binding region" description="Homeobox" evidence="2">
    <location>
        <begin position="124"/>
        <end position="183"/>
    </location>
</feature>
<feature type="region of interest" description="Disordered" evidence="3">
    <location>
        <begin position="168"/>
        <end position="284"/>
    </location>
</feature>
<feature type="compositionally biased region" description="Basic and acidic residues" evidence="3">
    <location>
        <begin position="179"/>
        <end position="190"/>
    </location>
</feature>
<feature type="compositionally biased region" description="Low complexity" evidence="3">
    <location>
        <begin position="191"/>
        <end position="206"/>
    </location>
</feature>
<feature type="compositionally biased region" description="Low complexity" evidence="3">
    <location>
        <begin position="228"/>
        <end position="237"/>
    </location>
</feature>
<feature type="compositionally biased region" description="Pro residues" evidence="3">
    <location>
        <begin position="254"/>
        <end position="264"/>
    </location>
</feature>
<feature type="sequence conflict" description="In Ref. 1; CAA56584." evidence="17" ref="1">
    <original>MSMLPT</original>
    <variation>HVHARH</variation>
    <location>
        <begin position="1"/>
        <end position="6"/>
    </location>
</feature>
<feature type="sequence conflict" description="In Ref. 1; CAA56584." evidence="17" ref="1">
    <original>A</original>
    <variation>R</variation>
    <location>
        <position position="105"/>
    </location>
</feature>
<accession>Q62232</accession>
<accession>P70179</accession>
<evidence type="ECO:0000250" key="1">
    <source>
        <dbReference type="UniProtKB" id="Q9NPC8"/>
    </source>
</evidence>
<evidence type="ECO:0000255" key="2">
    <source>
        <dbReference type="PROSITE-ProRule" id="PRU00108"/>
    </source>
</evidence>
<evidence type="ECO:0000256" key="3">
    <source>
        <dbReference type="SAM" id="MobiDB-lite"/>
    </source>
</evidence>
<evidence type="ECO:0000269" key="4">
    <source>
    </source>
</evidence>
<evidence type="ECO:0000269" key="5">
    <source>
    </source>
</evidence>
<evidence type="ECO:0000269" key="6">
    <source>
    </source>
</evidence>
<evidence type="ECO:0000269" key="7">
    <source>
    </source>
</evidence>
<evidence type="ECO:0000269" key="8">
    <source>
    </source>
</evidence>
<evidence type="ECO:0000269" key="9">
    <source>
    </source>
</evidence>
<evidence type="ECO:0000269" key="10">
    <source>
    </source>
</evidence>
<evidence type="ECO:0000269" key="11">
    <source>
    </source>
</evidence>
<evidence type="ECO:0000269" key="12">
    <source>
    </source>
</evidence>
<evidence type="ECO:0000269" key="13">
    <source>
    </source>
</evidence>
<evidence type="ECO:0000269" key="14">
    <source>
    </source>
</evidence>
<evidence type="ECO:0000269" key="15">
    <source>
    </source>
</evidence>
<evidence type="ECO:0000269" key="16">
    <source>
    </source>
</evidence>
<evidence type="ECO:0000305" key="17"/>
<sequence length="296" mass="32718">MSMLPTFGFTQEQVACVCEVLQQGGNIERLGRFLWSLPACEHLHKNESVLKAKAVVAFHRGNFRELYKILESHQFSPHNHAKLQQLWLKAHYIEAEKLRGRPLGAVGKYRVRRKFPLPRSIWDGEETSYCFKEKSRSVLREWYAHNPYPSPREKRELAEATGLTTTQVSNWFKNRRQRDRAAEAKERENSENSNSSSHNPLASSLNGSGKSVLGSSEDEKTPSGTPDHSSSSPALLLSPPPPPGLPSLHSLGHPPGPSAVPVPVPGGGGADPLQHHHSLQDSILNPMSANLVDLGS</sequence>
<organism>
    <name type="scientific">Mus musculus</name>
    <name type="common">Mouse</name>
    <dbReference type="NCBI Taxonomy" id="10090"/>
    <lineage>
        <taxon>Eukaryota</taxon>
        <taxon>Metazoa</taxon>
        <taxon>Chordata</taxon>
        <taxon>Craniata</taxon>
        <taxon>Vertebrata</taxon>
        <taxon>Euteleostomi</taxon>
        <taxon>Mammalia</taxon>
        <taxon>Eutheria</taxon>
        <taxon>Euarchontoglires</taxon>
        <taxon>Glires</taxon>
        <taxon>Rodentia</taxon>
        <taxon>Myomorpha</taxon>
        <taxon>Muroidea</taxon>
        <taxon>Muridae</taxon>
        <taxon>Murinae</taxon>
        <taxon>Mus</taxon>
        <taxon>Mus</taxon>
    </lineage>
</organism>
<keyword id="KW-0217">Developmental protein</keyword>
<keyword id="KW-0238">DNA-binding</keyword>
<keyword id="KW-0371">Homeobox</keyword>
<keyword id="KW-0539">Nucleus</keyword>
<keyword id="KW-1185">Reference proteome</keyword>
<comment type="function">
    <text evidence="1 6 7 8 9 11 12 13 14 15">Transcription factor that plays an important role in the development of several organs, including kidney, skull and stomach. During kidney development, maintains cap mesenchyme multipotent nephron progenitor cells in an undifferentiated state by opposing the inductive signals emanating from the ureteric bud and cooperates with WNT9B to promote renewing progenitor cells proliferation. Acts through its interaction with TCF7L2 and OSR1 in a canonical Wnt signaling independent manner preventing transcription of differentiation genes in cap mesenchyme such as WNT4. Also acts independently of OSR1 to activate expression of many cap mesenchyme genes, including itself, GDNF and OSR1. During craniofacial development plays a role in growth and elongation of the cranial base through regulation of chondrocyte differentiation (PubMed:20515681). During stomach organogenesis, controls pyloric sphincter formation and mucosal growth through regulation of a gene network including NKX2-5, BMPR1B, BMP4, SOX9 and GREM1 (PubMed:19660448). During branchial arch development, acts to mediate HOXA2 control over the insulin-like growth factor pathway (PubMed:18321982). May also be involved in limb tendon and ligament development (PubMed:7720577). Plays a role in cell proliferation and migration (By similarity).</text>
</comment>
<comment type="subunit">
    <text evidence="4 5 13 14">Interacts with TCF7L2; in a canonical Wnt signaling independent manner; prevents transcription of differentiation genes in cap mesenchyme. Interacts with OSR1; form a strong repressor complex with TCF7L2, TLE2 and TLE3 to prevent the activation of Wnt/beta-catenin target genes in the cap mesenchyme. Interacts with HOXA11, EYA1 and EYA3.</text>
</comment>
<comment type="interaction">
    <interactant intactId="EBI-1368736">
        <id>Q62232</id>
    </interactant>
    <interactant intactId="EBI-1368503">
        <id>P97767</id>
        <label>Eya1</label>
    </interactant>
    <organismsDiffer>false</organismsDiffer>
    <experiments>3</experiments>
</comment>
<comment type="subcellular location">
    <subcellularLocation>
        <location evidence="16">Nucleus</location>
    </subcellularLocation>
</comment>
<comment type="tissue specificity">
    <text>Expressed in phalangeal tendons, in smooth muscle and in head and body mesenchyme.</text>
</comment>
<comment type="developmental stage">
    <text evidence="6 9">First expressed at 8.5 dpc of embryo development in a restricted mesodermal subpopulation at the anterior hindbrain level. Expression of SIX2 in the developing limb begins at 11 dpc and is more pronounced ventrally. It progresses into the developing phalanges at 12.5 dpc. At 10.5 dpc expressed in the metanephric blastema, which signals the ureteric bud to evaginate from the Wolffian duct. At 11.5 dpc expressed at high levels in the dorsal anephric mesenchyme and is down-regulated where pretubular aggregates will form on the ventral side of the ureteric bud. At 14.5 dpc, expression persists in the peripheral mesenchyme of the renal cortex. At 9.5 dpc, expressed in the splanchnic mesoderm of the stomach anlage. By 10.5 dpc, expressed in the mesoderm of the posterior stomach. Expression is seen in the presumptive glandular stomach primordium at 11.5 dpc. At 12.5 dpc, becomes restricted to the mesenchyme of the antral region of the posterior stomach. At 14.5 dpc, expression remains in the antrum, just anterior to the pyloric sphincter.</text>
</comment>
<comment type="induction">
    <text evidence="7 10 13">Down-regulated by CTNNB1 upon differentiation. Activated by TLX1 in the kidney and repressed by HOXA2 in the branchial arch and facial mesenchyme.</text>
</comment>
<comment type="disruption phenotype">
    <text evidence="6">Six2 knockout heterozygous mice not exhibit any obvious abnormalities. However, Six2 knockout nullizygous mice die soon after birth.</text>
</comment>
<comment type="similarity">
    <text evidence="17">Belongs to the SIX/Sine oculis homeobox family.</text>
</comment>
<comment type="sequence caution" evidence="17">
    <conflict type="erroneous initiation">
        <sequence resource="EMBL-CDS" id="CAA56584"/>
    </conflict>
</comment>
<name>SIX2_MOUSE</name>
<reference key="1">
    <citation type="journal article" date="1995" name="Development">
        <title>Homeobox genes and connective tissue patterning.</title>
        <authorList>
            <person name="Oliver G."/>
            <person name="Wehr R."/>
            <person name="Jenkins N.A."/>
            <person name="Copeland N.G."/>
            <person name="Cheyette B.N.R."/>
            <person name="Hartenstein V."/>
            <person name="Zipursky S.L."/>
            <person name="Gruss P."/>
        </authorList>
    </citation>
    <scope>NUCLEOTIDE SEQUENCE [MRNA]</scope>
    <scope>FUNCTION</scope>
    <source>
        <strain>C57BL/6J</strain>
        <tissue>Embryo</tissue>
    </source>
</reference>
<reference key="2">
    <citation type="journal article" date="1996" name="FEBS Lett.">
        <title>Identification and expression of Six family genes in mouse retina.</title>
        <authorList>
            <person name="Kawakami K."/>
            <person name="Ohto H."/>
            <person name="Takizawa T."/>
            <person name="Saito T."/>
        </authorList>
    </citation>
    <scope>NUCLEOTIDE SEQUENCE [MRNA]</scope>
    <scope>SUBCELLULAR LOCATION</scope>
    <source>
        <strain>BALB/cJ</strain>
    </source>
</reference>
<reference key="3">
    <citation type="journal article" date="2004" name="Genome Res.">
        <title>The status, quality, and expansion of the NIH full-length cDNA project: the Mammalian Gene Collection (MGC).</title>
        <authorList>
            <consortium name="The MGC Project Team"/>
        </authorList>
    </citation>
    <scope>NUCLEOTIDE SEQUENCE [LARGE SCALE MRNA]</scope>
    <source>
        <tissue>Embryo</tissue>
    </source>
</reference>
<reference key="4">
    <citation type="journal article" date="2001" name="Hum. Mol. Genet.">
        <title>Molecular effects of Eya1 domain mutations causing organ defects in BOR syndrome.</title>
        <authorList>
            <person name="Buller C."/>
            <person name="Xu X."/>
            <person name="Marquis V."/>
            <person name="Schwanke R."/>
            <person name="Xu P.X."/>
        </authorList>
    </citation>
    <scope>INTERACTION WITH EYA1</scope>
</reference>
<reference key="5">
    <citation type="journal article" date="2002" name="Mol. Cell. Biol.">
        <title>Molecular interaction and synergistic activation of a promoter by Six, Eya, and Dach proteins mediated through CREB binding protein.</title>
        <authorList>
            <person name="Ikeda K."/>
            <person name="Watanabe Y."/>
            <person name="Ohto H."/>
            <person name="Kawakami K."/>
        </authorList>
    </citation>
    <scope>INTERACTION WITH EYA3</scope>
</reference>
<reference key="6">
    <citation type="journal article" date="2006" name="EMBO J.">
        <title>Six2 is required for suppression of nephrogenesis and progenitor renewal in the developing kidney.</title>
        <authorList>
            <person name="Self M."/>
            <person name="Lagutin O.V."/>
            <person name="Bowling B."/>
            <person name="Hendrix J."/>
            <person name="Cai Y."/>
            <person name="Dressler G.R."/>
            <person name="Oliver G."/>
        </authorList>
    </citation>
    <scope>FUNCTION IN KIDNEY DEVELOPMENT</scope>
    <scope>DEVELOPMENTAL STAGE</scope>
    <scope>DISRUPTION PHENOTYPE</scope>
</reference>
<reference key="7">
    <citation type="journal article" date="2008" name="Cell Stem Cell">
        <title>Six2 defines and regulates a multipotent self-renewing nephron progenitor population throughout mammalian kidney development.</title>
        <authorList>
            <person name="Kobayashi A."/>
            <person name="Valerius M.T."/>
            <person name="Mugford J.W."/>
            <person name="Carroll T.J."/>
            <person name="Self M."/>
            <person name="Oliver G."/>
            <person name="McMahon A.P."/>
        </authorList>
    </citation>
    <scope>FUNCTION IN NEPHRON DEVELOPMENT</scope>
</reference>
<reference key="8">
    <citation type="journal article" date="2008" name="Development">
        <title>Six2 functions redundantly immediately downstream of Hoxa2.</title>
        <authorList>
            <person name="Kutejova E."/>
            <person name="Engist B."/>
            <person name="Self M."/>
            <person name="Oliver G."/>
            <person name="Kirilenko P."/>
            <person name="Bobola N."/>
        </authorList>
    </citation>
    <scope>FUNCTION IN BRANCHIAL ARCH DEVELOPMENT</scope>
    <scope>INDUCTION</scope>
</reference>
<reference key="9">
    <citation type="journal article" date="2009" name="Dev. Biol.">
        <title>Six2 activity is required for the formation of the mammalian pyloric sphincter.</title>
        <authorList>
            <person name="Self M."/>
            <person name="Geng X."/>
            <person name="Oliver G."/>
        </authorList>
    </citation>
    <scope>FUNCTION IN STOMACH MORPHOGENESIS</scope>
    <scope>DEVELOPMENTAL STAGE</scope>
</reference>
<reference key="10">
    <citation type="journal article" date="2009" name="Dev. Biol.">
        <title>Non-homeodomain regions of Hox proteins mediate activation versus repression of Six2 via a single enhancer site in vivo.</title>
        <authorList>
            <person name="Yallowitz A.R."/>
            <person name="Gong K.Q."/>
            <person name="Swinehart I.T."/>
            <person name="Nelson L.T."/>
            <person name="Wellik D.M."/>
        </authorList>
    </citation>
    <scope>INDUCTION</scope>
</reference>
<reference key="11">
    <citation type="journal article" date="2010" name="Dev. Biol.">
        <title>Inactivation of Six2 in mouse identifies a novel genetic mechanism controlling development and growth of the cranial base.</title>
        <authorList>
            <person name="He G."/>
            <person name="Tavella S."/>
            <person name="Hanley K.P."/>
            <person name="Self M."/>
            <person name="Oliver G."/>
            <person name="Grifone R."/>
            <person name="Hanley N."/>
            <person name="Ward C."/>
            <person name="Bobola N."/>
        </authorList>
    </citation>
    <scope>FUNCTION IN CRANIOFACIAL DEVELOPMENT</scope>
</reference>
<reference key="12">
    <citation type="journal article" date="2011" name="Development">
        <title>Canonical Wnt9b signaling balances progenitor cell expansion and differentiation during kidney development.</title>
        <authorList>
            <person name="Karner C.M."/>
            <person name="Das A."/>
            <person name="Ma Z."/>
            <person name="Self M."/>
            <person name="Chen C."/>
            <person name="Lum L."/>
            <person name="Oliver G."/>
            <person name="Carroll T.J."/>
        </authorList>
    </citation>
    <scope>FUNCTION IN PROGENITOR CELL PROLIFERATION</scope>
</reference>
<reference key="13">
    <citation type="journal article" date="2012" name="Dev. Cell">
        <title>Six2 and Wnt regulate self-renewal and commitment of nephron progenitors through shared gene regulatory networks.</title>
        <authorList>
            <person name="Park J.S."/>
            <person name="Ma W."/>
            <person name="O'Brien L.L."/>
            <person name="Chung E."/>
            <person name="Guo J.J."/>
            <person name="Cheng J.G."/>
            <person name="Valerius M.T."/>
            <person name="McMahon J.A."/>
            <person name="Wong W.H."/>
            <person name="McMahon A.P."/>
        </authorList>
    </citation>
    <scope>FUNCTION IN REGULATION OF NEPHRON PROGENITOR RENEWAL</scope>
    <scope>INTERACTION WITH TCF7L2 AND HOXA11</scope>
    <scope>INDUCTION</scope>
</reference>
<reference key="14">
    <citation type="journal article" date="2014" name="Development">
        <title>Osr1 acts downstream of and interacts synergistically with Six2 to maintain nephron progenitor cells during kidney organogenesis.</title>
        <authorList>
            <person name="Xu J."/>
            <person name="Liu H."/>
            <person name="Park J.S."/>
            <person name="Lan Y."/>
            <person name="Jiang R."/>
        </authorList>
    </citation>
    <scope>FUNCTION IN REGULATION OF NEPHRON PROGENITOR RENEWAL</scope>
    <scope>INTERACTION WITH OSR1</scope>
</reference>
<proteinExistence type="evidence at protein level"/>
<gene>
    <name type="primary">Six2</name>
</gene>
<protein>
    <recommendedName>
        <fullName>Homeobox protein SIX2</fullName>
    </recommendedName>
    <alternativeName>
        <fullName>Sine oculis homeobox homolog 2</fullName>
    </alternativeName>
</protein>